<keyword id="KW-0378">Hydrolase</keyword>
<keyword id="KW-0597">Phosphoprotein</keyword>
<keyword id="KW-0645">Protease</keyword>
<keyword id="KW-1185">Reference proteome</keyword>
<keyword id="KW-0788">Thiol protease</keyword>
<keyword id="KW-0833">Ubl conjugation pathway</keyword>
<feature type="chain" id="PRO_0000344040" description="Ubiquitin carboxyl-terminal hydrolase MINDY-1">
    <location>
        <begin position="1"/>
        <end position="482"/>
    </location>
</feature>
<feature type="region of interest" description="Disordered" evidence="2">
    <location>
        <begin position="1"/>
        <end position="119"/>
    </location>
</feature>
<feature type="region of interest" description="Ubiquitin-binding domain (UBD)" evidence="1">
    <location>
        <begin position="402"/>
        <end position="441"/>
    </location>
</feature>
<feature type="region of interest" description="Disordered" evidence="2">
    <location>
        <begin position="437"/>
        <end position="482"/>
    </location>
</feature>
<feature type="compositionally biased region" description="Basic and acidic residues" evidence="2">
    <location>
        <begin position="21"/>
        <end position="66"/>
    </location>
</feature>
<feature type="compositionally biased region" description="Pro residues" evidence="2">
    <location>
        <begin position="82"/>
        <end position="94"/>
    </location>
</feature>
<feature type="compositionally biased region" description="Polar residues" evidence="2">
    <location>
        <begin position="106"/>
        <end position="119"/>
    </location>
</feature>
<feature type="compositionally biased region" description="Low complexity" evidence="2">
    <location>
        <begin position="437"/>
        <end position="446"/>
    </location>
</feature>
<feature type="compositionally biased region" description="Basic and acidic residues" evidence="2">
    <location>
        <begin position="466"/>
        <end position="482"/>
    </location>
</feature>
<feature type="active site" description="Nucleophile" evidence="1">
    <location>
        <position position="151"/>
    </location>
</feature>
<feature type="active site" description="Proton acceptor" evidence="1">
    <location>
        <position position="333"/>
    </location>
</feature>
<feature type="site" description="Ubiquitin-binding" evidence="1">
    <location>
        <position position="427"/>
    </location>
</feature>
<feature type="site" description="Ubiquitin-binding" evidence="1">
    <location>
        <begin position="430"/>
        <end position="431"/>
    </location>
</feature>
<feature type="site" description="Ubiquitin-binding" evidence="1">
    <location>
        <position position="434"/>
    </location>
</feature>
<feature type="modified residue" description="Phosphoserine" evidence="1">
    <location>
        <position position="117"/>
    </location>
</feature>
<feature type="modified residue" description="Phosphoserine" evidence="1">
    <location>
        <position position="454"/>
    </location>
</feature>
<sequence length="482" mass="52729">MEQPQAECPAPSKTNSAETVESEKHEALSGPEKHPQDKDGADAAPEKHPQDKDGADAHGEAGKQKSGDQTLPPVQDGGNLECPPPEASSSPPGPACGIPSEVETTEACSRPQQLPQSPRIQQPDLDFYCVKWIPWKGERTPIITQSSNGPCPLLAIMNILFLQWKVKLPPQKEVITSDELLTHLGNCLLSIKPQEKSEGLQLNFQQNVGDAMTVLPKLATGLDVNVRFTGVSDFEYTPECSVFDLLGVPLYHGWLVDPQSPEAVSAVGKLSYNQLVEKIIICKHSSDSNLVTEGLIAEQFLETTAAQLTYHGLCELTATAKEDELSVFFRNNHFSTMTKHKSHLYLLVTDQGFLQEEQVVWESLHNVDGDSCFCDSDFHLSHSLGKSHGAEGGSGSPEKQLQVDQDYLIALSLQQQQQPQGMLGLSDLELAQQLQQEEYQQQQAVQPVRTRAPSSPGRGATSGRPAGERRQRSKTESDCVLL</sequence>
<gene>
    <name type="primary">Mindy1</name>
    <name type="synonym">Fam63a</name>
</gene>
<accession>Q5BJQ2</accession>
<comment type="function">
    <text evidence="1">Hydrolase that can specifically remove 'Lys-48'-linked conjugated ubiquitin from proteins. Has exodeubiquitinase activity and has a preference for long polyubiquitin chains. May play a regulatory role at the level of protein turnover.</text>
</comment>
<comment type="catalytic activity">
    <reaction evidence="1">
        <text>Thiol-dependent hydrolysis of ester, thioester, amide, peptide and isopeptide bonds formed by the C-terminal Gly of ubiquitin (a 76-residue protein attached to proteins as an intracellular targeting signal).</text>
        <dbReference type="EC" id="3.4.19.12"/>
    </reaction>
</comment>
<comment type="similarity">
    <text evidence="3">Belongs to the MINDY deubiquitinase family. FAM63 subfamily.</text>
</comment>
<evidence type="ECO:0000250" key="1">
    <source>
        <dbReference type="UniProtKB" id="Q8N5J2"/>
    </source>
</evidence>
<evidence type="ECO:0000256" key="2">
    <source>
        <dbReference type="SAM" id="MobiDB-lite"/>
    </source>
</evidence>
<evidence type="ECO:0000305" key="3"/>
<dbReference type="EC" id="3.4.19.12"/>
<dbReference type="EMBL" id="BC091386">
    <property type="protein sequence ID" value="AAH91386.1"/>
    <property type="molecule type" value="mRNA"/>
</dbReference>
<dbReference type="RefSeq" id="NP_001020289.1">
    <property type="nucleotide sequence ID" value="NM_001025118.1"/>
</dbReference>
<dbReference type="RefSeq" id="XP_017446390.1">
    <property type="nucleotide sequence ID" value="XM_017590901.3"/>
</dbReference>
<dbReference type="RefSeq" id="XP_038958280.1">
    <property type="nucleotide sequence ID" value="XM_039102352.2"/>
</dbReference>
<dbReference type="SMR" id="Q5BJQ2"/>
<dbReference type="FunCoup" id="Q5BJQ2">
    <property type="interactions" value="595"/>
</dbReference>
<dbReference type="STRING" id="10116.ENSRNOP00000053218"/>
<dbReference type="PhosphoSitePlus" id="Q5BJQ2"/>
<dbReference type="jPOST" id="Q5BJQ2"/>
<dbReference type="PaxDb" id="10116-ENSRNOP00000053218"/>
<dbReference type="Ensembl" id="ENSRNOT00000056380.4">
    <property type="protein sequence ID" value="ENSRNOP00000053218.2"/>
    <property type="gene ID" value="ENSRNOG00000021131.7"/>
</dbReference>
<dbReference type="GeneID" id="310665"/>
<dbReference type="KEGG" id="rno:310665"/>
<dbReference type="UCSC" id="RGD:1559660">
    <property type="organism name" value="rat"/>
</dbReference>
<dbReference type="AGR" id="RGD:1559660"/>
<dbReference type="CTD" id="55793"/>
<dbReference type="RGD" id="1559660">
    <property type="gene designation" value="Mindy1"/>
</dbReference>
<dbReference type="eggNOG" id="KOG2427">
    <property type="taxonomic scope" value="Eukaryota"/>
</dbReference>
<dbReference type="GeneTree" id="ENSGT00390000016607"/>
<dbReference type="HOGENOM" id="CLU_022566_5_1_1"/>
<dbReference type="InParanoid" id="Q5BJQ2"/>
<dbReference type="OMA" id="HTRFSNE"/>
<dbReference type="OrthoDB" id="76098at9989"/>
<dbReference type="PhylomeDB" id="Q5BJQ2"/>
<dbReference type="TreeFam" id="TF314589"/>
<dbReference type="PRO" id="PR:Q5BJQ2"/>
<dbReference type="Proteomes" id="UP000002494">
    <property type="component" value="Chromosome 2"/>
</dbReference>
<dbReference type="Bgee" id="ENSRNOG00000021131">
    <property type="expression patterns" value="Expressed in ovary and 20 other cell types or tissues"/>
</dbReference>
<dbReference type="GO" id="GO:0016604">
    <property type="term" value="C:nuclear body"/>
    <property type="evidence" value="ECO:0007669"/>
    <property type="project" value="Ensembl"/>
</dbReference>
<dbReference type="GO" id="GO:0016807">
    <property type="term" value="F:cysteine-type carboxypeptidase activity"/>
    <property type="evidence" value="ECO:0000266"/>
    <property type="project" value="RGD"/>
</dbReference>
<dbReference type="GO" id="GO:0004843">
    <property type="term" value="F:cysteine-type deubiquitinase activity"/>
    <property type="evidence" value="ECO:0007669"/>
    <property type="project" value="UniProtKB-EC"/>
</dbReference>
<dbReference type="GO" id="GO:1990380">
    <property type="term" value="F:K48-linked deubiquitinase activity"/>
    <property type="evidence" value="ECO:0000266"/>
    <property type="project" value="RGD"/>
</dbReference>
<dbReference type="GO" id="GO:0036435">
    <property type="term" value="F:K48-linked polyubiquitin modification-dependent protein binding"/>
    <property type="evidence" value="ECO:0000250"/>
    <property type="project" value="UniProtKB"/>
</dbReference>
<dbReference type="GO" id="GO:0006508">
    <property type="term" value="P:proteolysis"/>
    <property type="evidence" value="ECO:0007669"/>
    <property type="project" value="UniProtKB-KW"/>
</dbReference>
<dbReference type="InterPro" id="IPR007518">
    <property type="entry name" value="MINDY"/>
</dbReference>
<dbReference type="InterPro" id="IPR033979">
    <property type="entry name" value="MINDY_domain"/>
</dbReference>
<dbReference type="PANTHER" id="PTHR18063">
    <property type="entry name" value="NF-E2 INDUCIBLE PROTEIN"/>
    <property type="match status" value="1"/>
</dbReference>
<dbReference type="PANTHER" id="PTHR18063:SF7">
    <property type="entry name" value="UBIQUITIN CARBOXYL-TERMINAL HYDROLASE MINDY-1"/>
    <property type="match status" value="1"/>
</dbReference>
<dbReference type="Pfam" id="PF04424">
    <property type="entry name" value="MINDY_DUB"/>
    <property type="match status" value="1"/>
</dbReference>
<proteinExistence type="evidence at transcript level"/>
<organism>
    <name type="scientific">Rattus norvegicus</name>
    <name type="common">Rat</name>
    <dbReference type="NCBI Taxonomy" id="10116"/>
    <lineage>
        <taxon>Eukaryota</taxon>
        <taxon>Metazoa</taxon>
        <taxon>Chordata</taxon>
        <taxon>Craniata</taxon>
        <taxon>Vertebrata</taxon>
        <taxon>Euteleostomi</taxon>
        <taxon>Mammalia</taxon>
        <taxon>Eutheria</taxon>
        <taxon>Euarchontoglires</taxon>
        <taxon>Glires</taxon>
        <taxon>Rodentia</taxon>
        <taxon>Myomorpha</taxon>
        <taxon>Muroidea</taxon>
        <taxon>Muridae</taxon>
        <taxon>Murinae</taxon>
        <taxon>Rattus</taxon>
    </lineage>
</organism>
<protein>
    <recommendedName>
        <fullName>Ubiquitin carboxyl-terminal hydrolase MINDY-1</fullName>
        <ecNumber>3.4.19.12</ecNumber>
    </recommendedName>
    <alternativeName>
        <fullName>Deubiquitinating enzyme MINDY-1</fullName>
    </alternativeName>
    <alternativeName>
        <fullName>Protein FAM63A</fullName>
    </alternativeName>
</protein>
<name>MINY1_RAT</name>
<reference key="1">
    <citation type="journal article" date="2004" name="Genome Res.">
        <title>The status, quality, and expansion of the NIH full-length cDNA project: the Mammalian Gene Collection (MGC).</title>
        <authorList>
            <consortium name="The MGC Project Team"/>
        </authorList>
    </citation>
    <scope>NUCLEOTIDE SEQUENCE [LARGE SCALE MRNA]</scope>
    <source>
        <tissue>Liver</tissue>
    </source>
</reference>